<sequence length="413" mass="45969">MDPEAKVSSSRRRDLPPIPQGQRRTPRALPSMPSQDTAEEMPAPKSRKKKAKRDAESVDEPDDGGMEMGGLASRRQSECPEPLTPEPLDNPPQRRKKKKKAQAIDAEGDQTDLVSNGDTLDQNTDEEVTRKPKKRKVKPKVTETQSNNELDVEDDDVITDPQSPIPQHSLFSAPQGPSQPVGKVFVEKSRRFQAADRVEQWKPSGPIEQSIMDIRSMWTTRDVSMRVHSGFRVIGLFSHGFLAGYAVWNIIVVYVLAGDQMSSLSNLLQQFHTLAYPAQSLLYLLLALSTVSAFDRVNLAKAPAAMRSLLRLSPVALASVFYFSALVLSLSQQMTSDRINLYKYSSYNTTLWPPGSESSILYPWITVNLVVSLLVGLAWILMSTSPDIDNTEAFLMSMEMEYPNSEEKGNVTA</sequence>
<name>T237B_DANRE</name>
<keyword id="KW-0966">Cell projection</keyword>
<keyword id="KW-0969">Cilium</keyword>
<keyword id="KW-0970">Cilium biogenesis/degradation</keyword>
<keyword id="KW-0472">Membrane</keyword>
<keyword id="KW-1185">Reference proteome</keyword>
<keyword id="KW-0812">Transmembrane</keyword>
<keyword id="KW-1133">Transmembrane helix</keyword>
<accession>Q66IE4</accession>
<reference key="1">
    <citation type="journal article" date="2013" name="Nature">
        <title>The zebrafish reference genome sequence and its relationship to the human genome.</title>
        <authorList>
            <person name="Howe K."/>
            <person name="Clark M.D."/>
            <person name="Torroja C.F."/>
            <person name="Torrance J."/>
            <person name="Berthelot C."/>
            <person name="Muffato M."/>
            <person name="Collins J.E."/>
            <person name="Humphray S."/>
            <person name="McLaren K."/>
            <person name="Matthews L."/>
            <person name="McLaren S."/>
            <person name="Sealy I."/>
            <person name="Caccamo M."/>
            <person name="Churcher C."/>
            <person name="Scott C."/>
            <person name="Barrett J.C."/>
            <person name="Koch R."/>
            <person name="Rauch G.J."/>
            <person name="White S."/>
            <person name="Chow W."/>
            <person name="Kilian B."/>
            <person name="Quintais L.T."/>
            <person name="Guerra-Assuncao J.A."/>
            <person name="Zhou Y."/>
            <person name="Gu Y."/>
            <person name="Yen J."/>
            <person name="Vogel J.H."/>
            <person name="Eyre T."/>
            <person name="Redmond S."/>
            <person name="Banerjee R."/>
            <person name="Chi J."/>
            <person name="Fu B."/>
            <person name="Langley E."/>
            <person name="Maguire S.F."/>
            <person name="Laird G.K."/>
            <person name="Lloyd D."/>
            <person name="Kenyon E."/>
            <person name="Donaldson S."/>
            <person name="Sehra H."/>
            <person name="Almeida-King J."/>
            <person name="Loveland J."/>
            <person name="Trevanion S."/>
            <person name="Jones M."/>
            <person name="Quail M."/>
            <person name="Willey D."/>
            <person name="Hunt A."/>
            <person name="Burton J."/>
            <person name="Sims S."/>
            <person name="McLay K."/>
            <person name="Plumb B."/>
            <person name="Davis J."/>
            <person name="Clee C."/>
            <person name="Oliver K."/>
            <person name="Clark R."/>
            <person name="Riddle C."/>
            <person name="Elliot D."/>
            <person name="Threadgold G."/>
            <person name="Harden G."/>
            <person name="Ware D."/>
            <person name="Begum S."/>
            <person name="Mortimore B."/>
            <person name="Kerry G."/>
            <person name="Heath P."/>
            <person name="Phillimore B."/>
            <person name="Tracey A."/>
            <person name="Corby N."/>
            <person name="Dunn M."/>
            <person name="Johnson C."/>
            <person name="Wood J."/>
            <person name="Clark S."/>
            <person name="Pelan S."/>
            <person name="Griffiths G."/>
            <person name="Smith M."/>
            <person name="Glithero R."/>
            <person name="Howden P."/>
            <person name="Barker N."/>
            <person name="Lloyd C."/>
            <person name="Stevens C."/>
            <person name="Harley J."/>
            <person name="Holt K."/>
            <person name="Panagiotidis G."/>
            <person name="Lovell J."/>
            <person name="Beasley H."/>
            <person name="Henderson C."/>
            <person name="Gordon D."/>
            <person name="Auger K."/>
            <person name="Wright D."/>
            <person name="Collins J."/>
            <person name="Raisen C."/>
            <person name="Dyer L."/>
            <person name="Leung K."/>
            <person name="Robertson L."/>
            <person name="Ambridge K."/>
            <person name="Leongamornlert D."/>
            <person name="McGuire S."/>
            <person name="Gilderthorp R."/>
            <person name="Griffiths C."/>
            <person name="Manthravadi D."/>
            <person name="Nichol S."/>
            <person name="Barker G."/>
            <person name="Whitehead S."/>
            <person name="Kay M."/>
            <person name="Brown J."/>
            <person name="Murnane C."/>
            <person name="Gray E."/>
            <person name="Humphries M."/>
            <person name="Sycamore N."/>
            <person name="Barker D."/>
            <person name="Saunders D."/>
            <person name="Wallis J."/>
            <person name="Babbage A."/>
            <person name="Hammond S."/>
            <person name="Mashreghi-Mohammadi M."/>
            <person name="Barr L."/>
            <person name="Martin S."/>
            <person name="Wray P."/>
            <person name="Ellington A."/>
            <person name="Matthews N."/>
            <person name="Ellwood M."/>
            <person name="Woodmansey R."/>
            <person name="Clark G."/>
            <person name="Cooper J."/>
            <person name="Tromans A."/>
            <person name="Grafham D."/>
            <person name="Skuce C."/>
            <person name="Pandian R."/>
            <person name="Andrews R."/>
            <person name="Harrison E."/>
            <person name="Kimberley A."/>
            <person name="Garnett J."/>
            <person name="Fosker N."/>
            <person name="Hall R."/>
            <person name="Garner P."/>
            <person name="Kelly D."/>
            <person name="Bird C."/>
            <person name="Palmer S."/>
            <person name="Gehring I."/>
            <person name="Berger A."/>
            <person name="Dooley C.M."/>
            <person name="Ersan-Urun Z."/>
            <person name="Eser C."/>
            <person name="Geiger H."/>
            <person name="Geisler M."/>
            <person name="Karotki L."/>
            <person name="Kirn A."/>
            <person name="Konantz J."/>
            <person name="Konantz M."/>
            <person name="Oberlander M."/>
            <person name="Rudolph-Geiger S."/>
            <person name="Teucke M."/>
            <person name="Lanz C."/>
            <person name="Raddatz G."/>
            <person name="Osoegawa K."/>
            <person name="Zhu B."/>
            <person name="Rapp A."/>
            <person name="Widaa S."/>
            <person name="Langford C."/>
            <person name="Yang F."/>
            <person name="Schuster S.C."/>
            <person name="Carter N.P."/>
            <person name="Harrow J."/>
            <person name="Ning Z."/>
            <person name="Herrero J."/>
            <person name="Searle S.M."/>
            <person name="Enright A."/>
            <person name="Geisler R."/>
            <person name="Plasterk R.H."/>
            <person name="Lee C."/>
            <person name="Westerfield M."/>
            <person name="de Jong P.J."/>
            <person name="Zon L.I."/>
            <person name="Postlethwait J.H."/>
            <person name="Nusslein-Volhard C."/>
            <person name="Hubbard T.J."/>
            <person name="Roest Crollius H."/>
            <person name="Rogers J."/>
            <person name="Stemple D.L."/>
        </authorList>
    </citation>
    <scope>NUCLEOTIDE SEQUENCE [LARGE SCALE GENOMIC DNA]</scope>
    <source>
        <strain>Tuebingen</strain>
    </source>
</reference>
<reference key="2">
    <citation type="submission" date="2004-09" db="EMBL/GenBank/DDBJ databases">
        <authorList>
            <consortium name="NIH - Zebrafish Gene Collection (ZGC) project"/>
        </authorList>
    </citation>
    <scope>NUCLEOTIDE SEQUENCE [LARGE SCALE MRNA]</scope>
    <source>
        <tissue>Embryo</tissue>
    </source>
</reference>
<reference key="3">
    <citation type="journal article" date="2011" name="Am. J. Hum. Genet.">
        <title>TMEM237 is mutated in individuals with a Joubert syndrome related disorder and expands the role of the TMEM family at the ciliary transition zone.</title>
        <authorList>
            <person name="Huang L."/>
            <person name="Szymanska K."/>
            <person name="Jensen V.L."/>
            <person name="Janecke A.R."/>
            <person name="Innes A.M."/>
            <person name="Davis E.E."/>
            <person name="Frosk P."/>
            <person name="Li C."/>
            <person name="Willer J.R."/>
            <person name="Chodirker B.N."/>
            <person name="Greenberg C.R."/>
            <person name="McLeod D.R."/>
            <person name="Bernier F.P."/>
            <person name="Chudley A.E."/>
            <person name="Muller T."/>
            <person name="Shboul M."/>
            <person name="Logan C.V."/>
            <person name="Loucks C.M."/>
            <person name="Beaulieu C.L."/>
            <person name="Bowie R.V."/>
            <person name="Bell S.M."/>
            <person name="Adkins J."/>
            <person name="Zuniga F.I."/>
            <person name="Ross K.D."/>
            <person name="Wang J."/>
            <person name="Ban M.R."/>
            <person name="Becker C."/>
            <person name="Nurnberg P."/>
            <person name="Douglas S."/>
            <person name="Craft C.M."/>
            <person name="Akimenko M.A."/>
            <person name="Hegele R.A."/>
            <person name="Ober C."/>
            <person name="Utermann G."/>
            <person name="Bolz H.J."/>
            <person name="Bulman D.E."/>
            <person name="Katsanis N."/>
            <person name="Blacque O.E."/>
            <person name="Doherty D."/>
            <person name="Parboosingh J.S."/>
            <person name="Leroux M.R."/>
            <person name="Johnson C.A."/>
            <person name="Boycott K.M."/>
        </authorList>
    </citation>
    <scope>FUNCTION</scope>
    <scope>DISRUPTION PHENOTYPE</scope>
</reference>
<evidence type="ECO:0000250" key="1"/>
<evidence type="ECO:0000255" key="2"/>
<evidence type="ECO:0000256" key="3">
    <source>
        <dbReference type="SAM" id="MobiDB-lite"/>
    </source>
</evidence>
<evidence type="ECO:0000269" key="4">
    <source>
    </source>
</evidence>
<evidence type="ECO:0000305" key="5"/>
<protein>
    <recommendedName>
        <fullName>Transmembrane protein 237B</fullName>
    </recommendedName>
    <alternativeName>
        <fullName>Amyotrophic lateral sclerosis 2 chromosomal region candidate gene 4 protein homolog B</fullName>
    </alternativeName>
</protein>
<gene>
    <name type="primary">tmem237b</name>
    <name type="synonym">als2cr4b</name>
    <name type="ORF">zgc:101660</name>
</gene>
<proteinExistence type="evidence at transcript level"/>
<organism>
    <name type="scientific">Danio rerio</name>
    <name type="common">Zebrafish</name>
    <name type="synonym">Brachydanio rerio</name>
    <dbReference type="NCBI Taxonomy" id="7955"/>
    <lineage>
        <taxon>Eukaryota</taxon>
        <taxon>Metazoa</taxon>
        <taxon>Chordata</taxon>
        <taxon>Craniata</taxon>
        <taxon>Vertebrata</taxon>
        <taxon>Euteleostomi</taxon>
        <taxon>Actinopterygii</taxon>
        <taxon>Neopterygii</taxon>
        <taxon>Teleostei</taxon>
        <taxon>Ostariophysi</taxon>
        <taxon>Cypriniformes</taxon>
        <taxon>Danionidae</taxon>
        <taxon>Danioninae</taxon>
        <taxon>Danio</taxon>
    </lineage>
</organism>
<dbReference type="EMBL" id="CU570787">
    <property type="status" value="NOT_ANNOTATED_CDS"/>
    <property type="molecule type" value="Genomic_DNA"/>
</dbReference>
<dbReference type="EMBL" id="BC081384">
    <property type="protein sequence ID" value="AAH81384.1"/>
    <property type="molecule type" value="mRNA"/>
</dbReference>
<dbReference type="RefSeq" id="NP_001004636.1">
    <property type="nucleotide sequence ID" value="NM_001004636.1"/>
</dbReference>
<dbReference type="FunCoup" id="Q66IE4">
    <property type="interactions" value="1155"/>
</dbReference>
<dbReference type="STRING" id="7955.ENSDARP00000010454"/>
<dbReference type="PaxDb" id="7955-ENSDARP00000010454"/>
<dbReference type="Ensembl" id="ENSDART00000005573">
    <property type="protein sequence ID" value="ENSDARP00000010454"/>
    <property type="gene ID" value="ENSDARG00000074248"/>
</dbReference>
<dbReference type="GeneID" id="447898"/>
<dbReference type="KEGG" id="dre:447898"/>
<dbReference type="AGR" id="ZFIN:ZDB-GENE-040912-63"/>
<dbReference type="CTD" id="447898"/>
<dbReference type="ZFIN" id="ZDB-GENE-040912-63">
    <property type="gene designation" value="tmem237b"/>
</dbReference>
<dbReference type="eggNOG" id="ENOG502QTW0">
    <property type="taxonomic scope" value="Eukaryota"/>
</dbReference>
<dbReference type="HOGENOM" id="CLU_061097_0_0_1"/>
<dbReference type="InParanoid" id="Q66IE4"/>
<dbReference type="OMA" id="WRIINLM"/>
<dbReference type="OrthoDB" id="550113at2759"/>
<dbReference type="PhylomeDB" id="Q66IE4"/>
<dbReference type="TreeFam" id="TF329703"/>
<dbReference type="PRO" id="PR:Q66IE4"/>
<dbReference type="Proteomes" id="UP000000437">
    <property type="component" value="Chromosome 6"/>
</dbReference>
<dbReference type="Bgee" id="ENSDARG00000074248">
    <property type="expression patterns" value="Expressed in retina and 32 other cell types or tissues"/>
</dbReference>
<dbReference type="GO" id="GO:0035869">
    <property type="term" value="C:ciliary transition zone"/>
    <property type="evidence" value="ECO:0000250"/>
    <property type="project" value="UniProtKB"/>
</dbReference>
<dbReference type="GO" id="GO:0016020">
    <property type="term" value="C:membrane"/>
    <property type="evidence" value="ECO:0007669"/>
    <property type="project" value="UniProtKB-SubCell"/>
</dbReference>
<dbReference type="GO" id="GO:0060271">
    <property type="term" value="P:cilium assembly"/>
    <property type="evidence" value="ECO:0000250"/>
    <property type="project" value="UniProtKB"/>
</dbReference>
<dbReference type="GO" id="GO:0060027">
    <property type="term" value="P:convergent extension involved in gastrulation"/>
    <property type="evidence" value="ECO:0000316"/>
    <property type="project" value="ZFIN"/>
</dbReference>
<dbReference type="GO" id="GO:0030111">
    <property type="term" value="P:regulation of Wnt signaling pathway"/>
    <property type="evidence" value="ECO:0000250"/>
    <property type="project" value="UniProtKB"/>
</dbReference>
<dbReference type="InterPro" id="IPR029409">
    <property type="entry name" value="TMEM237"/>
</dbReference>
<dbReference type="PANTHER" id="PTHR28388">
    <property type="entry name" value="TRANSMEMBRANE PROTEIN 237"/>
    <property type="match status" value="1"/>
</dbReference>
<dbReference type="PANTHER" id="PTHR28388:SF1">
    <property type="entry name" value="TRANSMEMBRANE PROTEIN 237"/>
    <property type="match status" value="1"/>
</dbReference>
<dbReference type="Pfam" id="PF15383">
    <property type="entry name" value="TMEM237"/>
    <property type="match status" value="1"/>
</dbReference>
<comment type="function">
    <text evidence="4">Component of the transition zone in primary cilia. Required for ciliogenesis.</text>
</comment>
<comment type="subcellular location">
    <subcellularLocation>
        <location evidence="5">Membrane</location>
        <topology evidence="5">Multi-pass membrane protein</topology>
    </subcellularLocation>
    <subcellularLocation>
        <location evidence="1">Cell projection</location>
        <location evidence="1">Cilium</location>
    </subcellularLocation>
    <text evidence="1">Localizes to the transition zone.</text>
</comment>
<comment type="disruption phenotype">
    <text evidence="4">Fishes lacking both tmem237a and tmem237b display defects in midsomitic embryos, including shortening of the anterior-posterior axis and small anterior structures, kinking of the notochord, and broadening and thinning of the somite.</text>
</comment>
<comment type="similarity">
    <text evidence="5">Belongs to the TMEM237 family.</text>
</comment>
<feature type="chain" id="PRO_0000415832" description="Transmembrane protein 237B">
    <location>
        <begin position="1"/>
        <end position="413"/>
    </location>
</feature>
<feature type="transmembrane region" description="Helical" evidence="2">
    <location>
        <begin position="233"/>
        <end position="253"/>
    </location>
</feature>
<feature type="transmembrane region" description="Helical" evidence="2">
    <location>
        <begin position="274"/>
        <end position="294"/>
    </location>
</feature>
<feature type="transmembrane region" description="Helical" evidence="2">
    <location>
        <begin position="312"/>
        <end position="332"/>
    </location>
</feature>
<feature type="transmembrane region" description="Helical" evidence="2">
    <location>
        <begin position="360"/>
        <end position="380"/>
    </location>
</feature>
<feature type="region of interest" description="Disordered" evidence="3">
    <location>
        <begin position="1"/>
        <end position="162"/>
    </location>
</feature>
<feature type="compositionally biased region" description="Polar residues" evidence="3">
    <location>
        <begin position="112"/>
        <end position="122"/>
    </location>
</feature>